<gene>
    <name evidence="1" type="primary">tilS</name>
    <name type="ordered locus">spyM18_0012</name>
</gene>
<sequence length="428" mass="50499">MMTYQEIFNEIKNKAYFKNHRHVLIAVSGGVDSMNLLHFLYLFQDKLKIRIGIAHVNHKQRSESDSEEAYLKCWAKKHDIPIYVSNFEGIFSEKAARDWRYAFFKSIMLKNNYSALVTAHHSDDQAETILMRLIRGSRLRYLSGIKSVQPFANGQLIRPFLTFSKKDLPEIFHFEDSSNRELSFLRNRVRNNYLPLLKQENPRFIQGLNQLALENSLLFQAFKELTNHITTTDLTEFNEQSKSIQYFLLQDYLEGFPDLDLKKSQFTQLLQIIQIAKQGYYYLKKDYYIFIDKFSFKITKIVPKTELVKDEKMLEYDSNLCYRDYYFSFMPKSNEDQGQVNIPLFSLSSIKLRSRQSGDYISFGHFSKKIRRLFIDEKFTIAERQNAIVGEQDGEIIFVLVGDKTYLRKACKHDIMLAKLYIDKLEKG</sequence>
<proteinExistence type="inferred from homology"/>
<comment type="function">
    <text evidence="1">Ligates lysine onto the cytidine present at position 34 of the AUA codon-specific tRNA(Ile) that contains the anticodon CAU, in an ATP-dependent manner. Cytidine is converted to lysidine, thus changing the amino acid specificity of the tRNA from methionine to isoleucine.</text>
</comment>
<comment type="catalytic activity">
    <reaction evidence="1">
        <text>cytidine(34) in tRNA(Ile2) + L-lysine + ATP = lysidine(34) in tRNA(Ile2) + AMP + diphosphate + H(+)</text>
        <dbReference type="Rhea" id="RHEA:43744"/>
        <dbReference type="Rhea" id="RHEA-COMP:10625"/>
        <dbReference type="Rhea" id="RHEA-COMP:10670"/>
        <dbReference type="ChEBI" id="CHEBI:15378"/>
        <dbReference type="ChEBI" id="CHEBI:30616"/>
        <dbReference type="ChEBI" id="CHEBI:32551"/>
        <dbReference type="ChEBI" id="CHEBI:33019"/>
        <dbReference type="ChEBI" id="CHEBI:82748"/>
        <dbReference type="ChEBI" id="CHEBI:83665"/>
        <dbReference type="ChEBI" id="CHEBI:456215"/>
        <dbReference type="EC" id="6.3.4.19"/>
    </reaction>
</comment>
<comment type="subcellular location">
    <subcellularLocation>
        <location evidence="1">Cytoplasm</location>
    </subcellularLocation>
</comment>
<comment type="domain">
    <text>The N-terminal region contains the highly conserved SGGXDS motif, predicted to be a P-loop motif involved in ATP binding.</text>
</comment>
<comment type="similarity">
    <text evidence="1">Belongs to the tRNA(Ile)-lysidine synthase family.</text>
</comment>
<evidence type="ECO:0000255" key="1">
    <source>
        <dbReference type="HAMAP-Rule" id="MF_01161"/>
    </source>
</evidence>
<accession>Q8P322</accession>
<name>TILS_STRP8</name>
<feature type="chain" id="PRO_0000181783" description="tRNA(Ile)-lysidine synthase">
    <location>
        <begin position="1"/>
        <end position="428"/>
    </location>
</feature>
<feature type="binding site" evidence="1">
    <location>
        <begin position="28"/>
        <end position="33"/>
    </location>
    <ligand>
        <name>ATP</name>
        <dbReference type="ChEBI" id="CHEBI:30616"/>
    </ligand>
</feature>
<organism>
    <name type="scientific">Streptococcus pyogenes serotype M18 (strain MGAS8232)</name>
    <dbReference type="NCBI Taxonomy" id="186103"/>
    <lineage>
        <taxon>Bacteria</taxon>
        <taxon>Bacillati</taxon>
        <taxon>Bacillota</taxon>
        <taxon>Bacilli</taxon>
        <taxon>Lactobacillales</taxon>
        <taxon>Streptococcaceae</taxon>
        <taxon>Streptococcus</taxon>
    </lineage>
</organism>
<reference key="1">
    <citation type="journal article" date="2002" name="Proc. Natl. Acad. Sci. U.S.A.">
        <title>Genome sequence and comparative microarray analysis of serotype M18 group A Streptococcus strains associated with acute rheumatic fever outbreaks.</title>
        <authorList>
            <person name="Smoot J.C."/>
            <person name="Barbian K.D."/>
            <person name="Van Gompel J.J."/>
            <person name="Smoot L.M."/>
            <person name="Chaussee M.S."/>
            <person name="Sylva G.L."/>
            <person name="Sturdevant D.E."/>
            <person name="Ricklefs S.M."/>
            <person name="Porcella S.F."/>
            <person name="Parkins L.D."/>
            <person name="Beres S.B."/>
            <person name="Campbell D.S."/>
            <person name="Smith T.M."/>
            <person name="Zhang Q."/>
            <person name="Kapur V."/>
            <person name="Daly J.A."/>
            <person name="Veasy L.G."/>
            <person name="Musser J.M."/>
        </authorList>
    </citation>
    <scope>NUCLEOTIDE SEQUENCE [LARGE SCALE GENOMIC DNA]</scope>
    <source>
        <strain>MGAS8232</strain>
    </source>
</reference>
<protein>
    <recommendedName>
        <fullName evidence="1">tRNA(Ile)-lysidine synthase</fullName>
        <ecNumber evidence="1">6.3.4.19</ecNumber>
    </recommendedName>
    <alternativeName>
        <fullName evidence="1">tRNA(Ile)-2-lysyl-cytidine synthase</fullName>
    </alternativeName>
    <alternativeName>
        <fullName evidence="1">tRNA(Ile)-lysidine synthetase</fullName>
    </alternativeName>
</protein>
<keyword id="KW-0067">ATP-binding</keyword>
<keyword id="KW-0963">Cytoplasm</keyword>
<keyword id="KW-0436">Ligase</keyword>
<keyword id="KW-0547">Nucleotide-binding</keyword>
<keyword id="KW-0819">tRNA processing</keyword>
<dbReference type="EC" id="6.3.4.19" evidence="1"/>
<dbReference type="EMBL" id="AE009949">
    <property type="protein sequence ID" value="AAL96845.1"/>
    <property type="molecule type" value="Genomic_DNA"/>
</dbReference>
<dbReference type="RefSeq" id="WP_011017224.1">
    <property type="nucleotide sequence ID" value="NC_003485.1"/>
</dbReference>
<dbReference type="SMR" id="Q8P322"/>
<dbReference type="KEGG" id="spm:spyM18_0012"/>
<dbReference type="HOGENOM" id="CLU_018869_0_2_9"/>
<dbReference type="GO" id="GO:0005737">
    <property type="term" value="C:cytoplasm"/>
    <property type="evidence" value="ECO:0007669"/>
    <property type="project" value="UniProtKB-SubCell"/>
</dbReference>
<dbReference type="GO" id="GO:0005524">
    <property type="term" value="F:ATP binding"/>
    <property type="evidence" value="ECO:0007669"/>
    <property type="project" value="UniProtKB-UniRule"/>
</dbReference>
<dbReference type="GO" id="GO:0032267">
    <property type="term" value="F:tRNA(Ile)-lysidine synthase activity"/>
    <property type="evidence" value="ECO:0007669"/>
    <property type="project" value="UniProtKB-EC"/>
</dbReference>
<dbReference type="GO" id="GO:0006400">
    <property type="term" value="P:tRNA modification"/>
    <property type="evidence" value="ECO:0007669"/>
    <property type="project" value="UniProtKB-UniRule"/>
</dbReference>
<dbReference type="CDD" id="cd01992">
    <property type="entry name" value="TilS_N"/>
    <property type="match status" value="1"/>
</dbReference>
<dbReference type="Gene3D" id="3.40.50.620">
    <property type="entry name" value="HUPs"/>
    <property type="match status" value="1"/>
</dbReference>
<dbReference type="HAMAP" id="MF_01161">
    <property type="entry name" value="tRNA_Ile_lys_synt"/>
    <property type="match status" value="1"/>
</dbReference>
<dbReference type="InterPro" id="IPR012796">
    <property type="entry name" value="Lysidine-tRNA-synth_C"/>
</dbReference>
<dbReference type="InterPro" id="IPR014729">
    <property type="entry name" value="Rossmann-like_a/b/a_fold"/>
</dbReference>
<dbReference type="InterPro" id="IPR011063">
    <property type="entry name" value="TilS/TtcA_N"/>
</dbReference>
<dbReference type="InterPro" id="IPR012094">
    <property type="entry name" value="tRNA_Ile_lys_synt"/>
</dbReference>
<dbReference type="InterPro" id="IPR012795">
    <property type="entry name" value="tRNA_Ile_lys_synt_N"/>
</dbReference>
<dbReference type="NCBIfam" id="TIGR02433">
    <property type="entry name" value="lysidine_TilS_C"/>
    <property type="match status" value="1"/>
</dbReference>
<dbReference type="NCBIfam" id="TIGR02432">
    <property type="entry name" value="lysidine_TilS_N"/>
    <property type="match status" value="1"/>
</dbReference>
<dbReference type="PANTHER" id="PTHR43033">
    <property type="entry name" value="TRNA(ILE)-LYSIDINE SYNTHASE-RELATED"/>
    <property type="match status" value="1"/>
</dbReference>
<dbReference type="PANTHER" id="PTHR43033:SF1">
    <property type="entry name" value="TRNA(ILE)-LYSIDINE SYNTHASE-RELATED"/>
    <property type="match status" value="1"/>
</dbReference>
<dbReference type="Pfam" id="PF01171">
    <property type="entry name" value="ATP_bind_3"/>
    <property type="match status" value="1"/>
</dbReference>
<dbReference type="SUPFAM" id="SSF52402">
    <property type="entry name" value="Adenine nucleotide alpha hydrolases-like"/>
    <property type="match status" value="1"/>
</dbReference>